<name>RIMM_BIFLO</name>
<gene>
    <name evidence="1" type="primary">rimM</name>
    <name type="ordered locus">BL0307</name>
</gene>
<sequence length="202" mass="22248">MHDDPQQLELLRVARIGRAQGLKGEVTVRLYTDDPEWRFEPDSVLYSQDGETEYIVEGSRTFKDRWILKLEGVDDRNAAEALNGVELYGEVDDAEDMLEADEWYPKDLIGLEARLVEGNGLGLPAGQVVGKVVDVVDSPAQSLLKIRLTEPVVTGQNSKGEDVVEKTALVPFVEALVPDIDLEEQYLTLDPPGGLIPGCGMI</sequence>
<feature type="chain" id="PRO_0000163257" description="Ribosome maturation factor RimM">
    <location>
        <begin position="1"/>
        <end position="202"/>
    </location>
</feature>
<feature type="domain" description="PRC barrel" evidence="1">
    <location>
        <begin position="100"/>
        <end position="195"/>
    </location>
</feature>
<protein>
    <recommendedName>
        <fullName evidence="1">Ribosome maturation factor RimM</fullName>
    </recommendedName>
</protein>
<proteinExistence type="inferred from homology"/>
<dbReference type="EMBL" id="AE014295">
    <property type="protein sequence ID" value="AAN24147.1"/>
    <property type="status" value="ALT_INIT"/>
    <property type="molecule type" value="Genomic_DNA"/>
</dbReference>
<dbReference type="RefSeq" id="NP_695511.1">
    <property type="nucleotide sequence ID" value="NC_004307.2"/>
</dbReference>
<dbReference type="SMR" id="Q8G7F9"/>
<dbReference type="STRING" id="206672.BL0307"/>
<dbReference type="EnsemblBacteria" id="AAN24147">
    <property type="protein sequence ID" value="AAN24147"/>
    <property type="gene ID" value="BL0307"/>
</dbReference>
<dbReference type="KEGG" id="blo:BL0307"/>
<dbReference type="PATRIC" id="fig|206672.9.peg.1045"/>
<dbReference type="HOGENOM" id="CLU_077636_0_0_11"/>
<dbReference type="OrthoDB" id="5381335at2"/>
<dbReference type="Proteomes" id="UP000000439">
    <property type="component" value="Chromosome"/>
</dbReference>
<dbReference type="GO" id="GO:0005737">
    <property type="term" value="C:cytoplasm"/>
    <property type="evidence" value="ECO:0007669"/>
    <property type="project" value="UniProtKB-SubCell"/>
</dbReference>
<dbReference type="GO" id="GO:0005840">
    <property type="term" value="C:ribosome"/>
    <property type="evidence" value="ECO:0007669"/>
    <property type="project" value="InterPro"/>
</dbReference>
<dbReference type="GO" id="GO:0043022">
    <property type="term" value="F:ribosome binding"/>
    <property type="evidence" value="ECO:0007669"/>
    <property type="project" value="InterPro"/>
</dbReference>
<dbReference type="GO" id="GO:0042274">
    <property type="term" value="P:ribosomal small subunit biogenesis"/>
    <property type="evidence" value="ECO:0007669"/>
    <property type="project" value="UniProtKB-UniRule"/>
</dbReference>
<dbReference type="GO" id="GO:0006364">
    <property type="term" value="P:rRNA processing"/>
    <property type="evidence" value="ECO:0007669"/>
    <property type="project" value="UniProtKB-UniRule"/>
</dbReference>
<dbReference type="Gene3D" id="2.30.30.240">
    <property type="entry name" value="PRC-barrel domain"/>
    <property type="match status" value="1"/>
</dbReference>
<dbReference type="Gene3D" id="2.40.30.60">
    <property type="entry name" value="RimM"/>
    <property type="match status" value="1"/>
</dbReference>
<dbReference type="HAMAP" id="MF_00014">
    <property type="entry name" value="Ribosome_mat_RimM"/>
    <property type="match status" value="1"/>
</dbReference>
<dbReference type="InterPro" id="IPR011033">
    <property type="entry name" value="PRC_barrel-like_sf"/>
</dbReference>
<dbReference type="InterPro" id="IPR056792">
    <property type="entry name" value="PRC_RimM"/>
</dbReference>
<dbReference type="InterPro" id="IPR011961">
    <property type="entry name" value="RimM"/>
</dbReference>
<dbReference type="InterPro" id="IPR002676">
    <property type="entry name" value="RimM_N"/>
</dbReference>
<dbReference type="InterPro" id="IPR036976">
    <property type="entry name" value="RimM_N_sf"/>
</dbReference>
<dbReference type="InterPro" id="IPR009000">
    <property type="entry name" value="Transl_B-barrel_sf"/>
</dbReference>
<dbReference type="NCBIfam" id="TIGR02273">
    <property type="entry name" value="16S_RimM"/>
    <property type="match status" value="1"/>
</dbReference>
<dbReference type="PANTHER" id="PTHR33692">
    <property type="entry name" value="RIBOSOME MATURATION FACTOR RIMM"/>
    <property type="match status" value="1"/>
</dbReference>
<dbReference type="PANTHER" id="PTHR33692:SF1">
    <property type="entry name" value="RIBOSOME MATURATION FACTOR RIMM"/>
    <property type="match status" value="1"/>
</dbReference>
<dbReference type="Pfam" id="PF24986">
    <property type="entry name" value="PRC_RimM"/>
    <property type="match status" value="1"/>
</dbReference>
<dbReference type="Pfam" id="PF01782">
    <property type="entry name" value="RimM"/>
    <property type="match status" value="1"/>
</dbReference>
<dbReference type="SUPFAM" id="SSF50346">
    <property type="entry name" value="PRC-barrel domain"/>
    <property type="match status" value="1"/>
</dbReference>
<dbReference type="SUPFAM" id="SSF50447">
    <property type="entry name" value="Translation proteins"/>
    <property type="match status" value="1"/>
</dbReference>
<keyword id="KW-0143">Chaperone</keyword>
<keyword id="KW-0963">Cytoplasm</keyword>
<keyword id="KW-1185">Reference proteome</keyword>
<keyword id="KW-0690">Ribosome biogenesis</keyword>
<keyword id="KW-0698">rRNA processing</keyword>
<evidence type="ECO:0000255" key="1">
    <source>
        <dbReference type="HAMAP-Rule" id="MF_00014"/>
    </source>
</evidence>
<evidence type="ECO:0000305" key="2"/>
<organism>
    <name type="scientific">Bifidobacterium longum (strain NCC 2705)</name>
    <dbReference type="NCBI Taxonomy" id="206672"/>
    <lineage>
        <taxon>Bacteria</taxon>
        <taxon>Bacillati</taxon>
        <taxon>Actinomycetota</taxon>
        <taxon>Actinomycetes</taxon>
        <taxon>Bifidobacteriales</taxon>
        <taxon>Bifidobacteriaceae</taxon>
        <taxon>Bifidobacterium</taxon>
    </lineage>
</organism>
<accession>Q8G7F9</accession>
<reference key="1">
    <citation type="journal article" date="2002" name="Proc. Natl. Acad. Sci. U.S.A.">
        <title>The genome sequence of Bifidobacterium longum reflects its adaptation to the human gastrointestinal tract.</title>
        <authorList>
            <person name="Schell M.A."/>
            <person name="Karmirantzou M."/>
            <person name="Snel B."/>
            <person name="Vilanova D."/>
            <person name="Berger B."/>
            <person name="Pessi G."/>
            <person name="Zwahlen M.-C."/>
            <person name="Desiere F."/>
            <person name="Bork P."/>
            <person name="Delley M."/>
            <person name="Pridmore R.D."/>
            <person name="Arigoni F."/>
        </authorList>
    </citation>
    <scope>NUCLEOTIDE SEQUENCE [LARGE SCALE GENOMIC DNA]</scope>
    <source>
        <strain>NCC 2705</strain>
    </source>
</reference>
<comment type="function">
    <text evidence="1">An accessory protein needed during the final step in the assembly of 30S ribosomal subunit, possibly for assembly of the head region. Essential for efficient processing of 16S rRNA. May be needed both before and after RbfA during the maturation of 16S rRNA. It has affinity for free ribosomal 30S subunits but not for 70S ribosomes.</text>
</comment>
<comment type="subunit">
    <text evidence="1">Binds ribosomal protein uS19.</text>
</comment>
<comment type="subcellular location">
    <subcellularLocation>
        <location evidence="1">Cytoplasm</location>
    </subcellularLocation>
</comment>
<comment type="domain">
    <text evidence="1">The PRC barrel domain binds ribosomal protein uS19.</text>
</comment>
<comment type="similarity">
    <text evidence="1">Belongs to the RimM family.</text>
</comment>
<comment type="sequence caution" evidence="2">
    <conflict type="erroneous initiation">
        <sequence resource="EMBL-CDS" id="AAN24147"/>
    </conflict>
</comment>